<feature type="chain" id="PRO_0000118000" description="NADH-ubiquinone oxidoreductase chain 4">
    <location>
        <begin position="1" status="less than"/>
        <end position="231" status="greater than"/>
    </location>
</feature>
<feature type="transmembrane region" description="Helical" evidence="2">
    <location>
        <begin position="1"/>
        <end position="21"/>
    </location>
</feature>
<feature type="transmembrane region" description="Helical" evidence="2">
    <location>
        <begin position="34"/>
        <end position="54"/>
    </location>
</feature>
<feature type="transmembrane region" description="Helical" evidence="2">
    <location>
        <begin position="63"/>
        <end position="85"/>
    </location>
</feature>
<feature type="transmembrane region" description="Helical" evidence="2">
    <location>
        <begin position="89"/>
        <end position="111"/>
    </location>
</feature>
<feature type="transmembrane region" description="Helical" evidence="2">
    <location>
        <begin position="128"/>
        <end position="148"/>
    </location>
</feature>
<feature type="transmembrane region" description="Helical" evidence="2">
    <location>
        <begin position="156"/>
        <end position="176"/>
    </location>
</feature>
<feature type="non-terminal residue">
    <location>
        <position position="1"/>
    </location>
</feature>
<feature type="non-terminal residue">
    <location>
        <position position="231"/>
    </location>
</feature>
<dbReference type="EC" id="7.1.1.2"/>
<dbReference type="EMBL" id="U41892">
    <property type="protein sequence ID" value="AAB46655.1"/>
    <property type="molecule type" value="Genomic_DNA"/>
</dbReference>
<dbReference type="SMR" id="P92759"/>
<dbReference type="GO" id="GO:0031966">
    <property type="term" value="C:mitochondrial membrane"/>
    <property type="evidence" value="ECO:0007669"/>
    <property type="project" value="UniProtKB-SubCell"/>
</dbReference>
<dbReference type="GO" id="GO:0008137">
    <property type="term" value="F:NADH dehydrogenase (ubiquinone) activity"/>
    <property type="evidence" value="ECO:0007669"/>
    <property type="project" value="UniProtKB-EC"/>
</dbReference>
<dbReference type="GO" id="GO:0048039">
    <property type="term" value="F:ubiquinone binding"/>
    <property type="evidence" value="ECO:0007669"/>
    <property type="project" value="TreeGrafter"/>
</dbReference>
<dbReference type="GO" id="GO:0042773">
    <property type="term" value="P:ATP synthesis coupled electron transport"/>
    <property type="evidence" value="ECO:0007669"/>
    <property type="project" value="InterPro"/>
</dbReference>
<dbReference type="GO" id="GO:0015990">
    <property type="term" value="P:electron transport coupled proton transport"/>
    <property type="evidence" value="ECO:0007669"/>
    <property type="project" value="TreeGrafter"/>
</dbReference>
<dbReference type="InterPro" id="IPR003918">
    <property type="entry name" value="NADH_UbQ_OxRdtase"/>
</dbReference>
<dbReference type="InterPro" id="IPR001750">
    <property type="entry name" value="ND/Mrp_TM"/>
</dbReference>
<dbReference type="PANTHER" id="PTHR43507">
    <property type="entry name" value="NADH-UBIQUINONE OXIDOREDUCTASE CHAIN 4"/>
    <property type="match status" value="1"/>
</dbReference>
<dbReference type="PANTHER" id="PTHR43507:SF20">
    <property type="entry name" value="NADH-UBIQUINONE OXIDOREDUCTASE CHAIN 4"/>
    <property type="match status" value="1"/>
</dbReference>
<dbReference type="Pfam" id="PF00361">
    <property type="entry name" value="Proton_antipo_M"/>
    <property type="match status" value="1"/>
</dbReference>
<reference key="1">
    <citation type="journal article" date="1996" name="Copeia">
        <title>Crotaline intergeneric relationships based on mitochondrial DNA sequence data.</title>
        <authorList>
            <person name="Kraus F."/>
            <person name="Mink D.G."/>
            <person name="Brown W.M."/>
        </authorList>
    </citation>
    <scope>NUCLEOTIDE SEQUENCE [GENOMIC DNA]</scope>
</reference>
<gene>
    <name type="primary">MT-ND4</name>
    <name type="synonym">MTND4</name>
    <name type="synonym">NADH4</name>
    <name type="synonym">ND4</name>
</gene>
<name>NU4M_TRIST</name>
<comment type="function">
    <text evidence="1">Core subunit of the mitochondrial membrane respiratory chain NADH dehydrogenase (Complex I) that is believed to belong to the minimal assembly required for catalysis. Complex I functions in the transfer of electrons from NADH to the respiratory chain. The immediate electron acceptor for the enzyme is believed to be ubiquinone (By similarity).</text>
</comment>
<comment type="catalytic activity">
    <reaction>
        <text>a ubiquinone + NADH + 5 H(+)(in) = a ubiquinol + NAD(+) + 4 H(+)(out)</text>
        <dbReference type="Rhea" id="RHEA:29091"/>
        <dbReference type="Rhea" id="RHEA-COMP:9565"/>
        <dbReference type="Rhea" id="RHEA-COMP:9566"/>
        <dbReference type="ChEBI" id="CHEBI:15378"/>
        <dbReference type="ChEBI" id="CHEBI:16389"/>
        <dbReference type="ChEBI" id="CHEBI:17976"/>
        <dbReference type="ChEBI" id="CHEBI:57540"/>
        <dbReference type="ChEBI" id="CHEBI:57945"/>
        <dbReference type="EC" id="7.1.1.2"/>
    </reaction>
</comment>
<comment type="subcellular location">
    <subcellularLocation>
        <location evidence="1">Mitochondrion membrane</location>
        <topology evidence="1">Multi-pass membrane protein</topology>
    </subcellularLocation>
</comment>
<comment type="similarity">
    <text evidence="3">Belongs to the complex I subunit 4 family.</text>
</comment>
<protein>
    <recommendedName>
        <fullName>NADH-ubiquinone oxidoreductase chain 4</fullName>
        <ecNumber>7.1.1.2</ecNumber>
    </recommendedName>
    <alternativeName>
        <fullName>NADH dehydrogenase subunit 4</fullName>
    </alternativeName>
</protein>
<organism>
    <name type="scientific">Trimeresurus stejnegeri</name>
    <name type="common">Chinese green tree viper</name>
    <name type="synonym">Viridovipera stejnegeri</name>
    <dbReference type="NCBI Taxonomy" id="39682"/>
    <lineage>
        <taxon>Eukaryota</taxon>
        <taxon>Metazoa</taxon>
        <taxon>Chordata</taxon>
        <taxon>Craniata</taxon>
        <taxon>Vertebrata</taxon>
        <taxon>Euteleostomi</taxon>
        <taxon>Lepidosauria</taxon>
        <taxon>Squamata</taxon>
        <taxon>Bifurcata</taxon>
        <taxon>Unidentata</taxon>
        <taxon>Episquamata</taxon>
        <taxon>Toxicofera</taxon>
        <taxon>Serpentes</taxon>
        <taxon>Colubroidea</taxon>
        <taxon>Viperidae</taxon>
        <taxon>Crotalinae</taxon>
        <taxon>Trimeresurus</taxon>
    </lineage>
</organism>
<geneLocation type="mitochondrion"/>
<sequence length="231" mass="25520">PIAGSMVLAAILLKLGGYGIIRMMQILPTTKTDMFLPFIVLALWGAILANLTCLQQTDLKSLIAYSSVSHMGLVVAAIIIQTPWGLSGAMALMIAHGFTSSALFCLANTTYERTHTRILILTRGFHNILPMTTTWWLLANLMNIATPPTMNFTSELLIMSALFNWCPTTIIMLGLSMLITASYSLHMFLSTQMGYPLLNSQTEPTHTREHLLMILHIIPLAMVSMKPELII</sequence>
<proteinExistence type="inferred from homology"/>
<keyword id="KW-0249">Electron transport</keyword>
<keyword id="KW-0472">Membrane</keyword>
<keyword id="KW-0496">Mitochondrion</keyword>
<keyword id="KW-0520">NAD</keyword>
<keyword id="KW-0679">Respiratory chain</keyword>
<keyword id="KW-1278">Translocase</keyword>
<keyword id="KW-0812">Transmembrane</keyword>
<keyword id="KW-1133">Transmembrane helix</keyword>
<keyword id="KW-0813">Transport</keyword>
<keyword id="KW-0830">Ubiquinone</keyword>
<accession>P92759</accession>
<evidence type="ECO:0000250" key="1"/>
<evidence type="ECO:0000255" key="2"/>
<evidence type="ECO:0000305" key="3"/>